<gene>
    <name type="primary">LFNG</name>
</gene>
<keyword id="KW-0217">Developmental protein</keyword>
<keyword id="KW-1015">Disulfide bond</keyword>
<keyword id="KW-0325">Glycoprotein</keyword>
<keyword id="KW-0328">Glycosyltransferase</keyword>
<keyword id="KW-0333">Golgi apparatus</keyword>
<keyword id="KW-0464">Manganese</keyword>
<keyword id="KW-0472">Membrane</keyword>
<keyword id="KW-0479">Metal-binding</keyword>
<keyword id="KW-1185">Reference proteome</keyword>
<keyword id="KW-0735">Signal-anchor</keyword>
<keyword id="KW-0808">Transferase</keyword>
<keyword id="KW-0812">Transmembrane</keyword>
<keyword id="KW-1133">Transmembrane helix</keyword>
<dbReference type="EC" id="2.4.1.222" evidence="2"/>
<dbReference type="EMBL" id="U91849">
    <property type="protein sequence ID" value="AAC60099.1"/>
    <property type="molecule type" value="mRNA"/>
</dbReference>
<dbReference type="EMBL" id="U97157">
    <property type="protein sequence ID" value="AAB60860.1"/>
    <property type="molecule type" value="mRNA"/>
</dbReference>
<dbReference type="PIR" id="JC5536">
    <property type="entry name" value="JC5536"/>
</dbReference>
<dbReference type="RefSeq" id="NP_990279.1">
    <property type="nucleotide sequence ID" value="NM_204948.2"/>
</dbReference>
<dbReference type="SMR" id="O12971"/>
<dbReference type="FunCoup" id="O12971">
    <property type="interactions" value="348"/>
</dbReference>
<dbReference type="STRING" id="9031.ENSGALP00000045107"/>
<dbReference type="CAZy" id="GT31">
    <property type="family name" value="Glycosyltransferase Family 31"/>
</dbReference>
<dbReference type="GlyCosmos" id="O12971">
    <property type="glycosylation" value="1 site, No reported glycans"/>
</dbReference>
<dbReference type="GlyGen" id="O12971">
    <property type="glycosylation" value="1 site"/>
</dbReference>
<dbReference type="PaxDb" id="9031-ENSGALP00000006798"/>
<dbReference type="Ensembl" id="ENSGALT00010048450.1">
    <property type="protein sequence ID" value="ENSGALP00010028564.1"/>
    <property type="gene ID" value="ENSGALG00010020053.1"/>
</dbReference>
<dbReference type="GeneID" id="395790"/>
<dbReference type="KEGG" id="gga:395790"/>
<dbReference type="CTD" id="3955"/>
<dbReference type="VEuPathDB" id="HostDB:geneid_395790"/>
<dbReference type="eggNOG" id="ENOG502QV30">
    <property type="taxonomic scope" value="Eukaryota"/>
</dbReference>
<dbReference type="GeneTree" id="ENSGT00940000158717"/>
<dbReference type="InParanoid" id="O12971"/>
<dbReference type="OMA" id="CPHTAVF"/>
<dbReference type="OrthoDB" id="8959630at2759"/>
<dbReference type="PhylomeDB" id="O12971"/>
<dbReference type="PRO" id="PR:O12971"/>
<dbReference type="Proteomes" id="UP000000539">
    <property type="component" value="Chromosome 14"/>
</dbReference>
<dbReference type="Bgee" id="ENSGALG00000038515">
    <property type="expression patterns" value="Expressed in lung and 10 other cell types or tissues"/>
</dbReference>
<dbReference type="GO" id="GO:0000139">
    <property type="term" value="C:Golgi membrane"/>
    <property type="evidence" value="ECO:0007669"/>
    <property type="project" value="UniProtKB-SubCell"/>
</dbReference>
<dbReference type="GO" id="GO:0046872">
    <property type="term" value="F:metal ion binding"/>
    <property type="evidence" value="ECO:0007669"/>
    <property type="project" value="UniProtKB-KW"/>
</dbReference>
<dbReference type="GO" id="GO:0033829">
    <property type="term" value="F:O-fucosylpeptide 3-beta-N-acetylglucosaminyltransferase activity"/>
    <property type="evidence" value="ECO:0000318"/>
    <property type="project" value="GO_Central"/>
</dbReference>
<dbReference type="GO" id="GO:0007386">
    <property type="term" value="P:compartment pattern specification"/>
    <property type="evidence" value="ECO:0007669"/>
    <property type="project" value="Ensembl"/>
</dbReference>
<dbReference type="GO" id="GO:1902367">
    <property type="term" value="P:negative regulation of Notch signaling pathway involved in somitogenesis"/>
    <property type="evidence" value="ECO:0007669"/>
    <property type="project" value="Ensembl"/>
</dbReference>
<dbReference type="GO" id="GO:0001541">
    <property type="term" value="P:ovarian follicle development"/>
    <property type="evidence" value="ECO:0007669"/>
    <property type="project" value="Ensembl"/>
</dbReference>
<dbReference type="GO" id="GO:0051446">
    <property type="term" value="P:positive regulation of meiotic cell cycle"/>
    <property type="evidence" value="ECO:0007669"/>
    <property type="project" value="Ensembl"/>
</dbReference>
<dbReference type="GO" id="GO:0045747">
    <property type="term" value="P:positive regulation of Notch signaling pathway"/>
    <property type="evidence" value="ECO:0007669"/>
    <property type="project" value="Ensembl"/>
</dbReference>
<dbReference type="GO" id="GO:0008593">
    <property type="term" value="P:regulation of Notch signaling pathway"/>
    <property type="evidence" value="ECO:0000250"/>
    <property type="project" value="UniProtKB"/>
</dbReference>
<dbReference type="GO" id="GO:0014807">
    <property type="term" value="P:regulation of somitogenesis"/>
    <property type="evidence" value="ECO:0007669"/>
    <property type="project" value="Ensembl"/>
</dbReference>
<dbReference type="GO" id="GO:0001756">
    <property type="term" value="P:somitogenesis"/>
    <property type="evidence" value="ECO:0007669"/>
    <property type="project" value="Ensembl"/>
</dbReference>
<dbReference type="GO" id="GO:0030217">
    <property type="term" value="P:T cell differentiation"/>
    <property type="evidence" value="ECO:0007669"/>
    <property type="project" value="Ensembl"/>
</dbReference>
<dbReference type="FunFam" id="3.90.550.50:FF:000003">
    <property type="entry name" value="Beta-1,3-N-acetylglucosaminyltransferase"/>
    <property type="match status" value="1"/>
</dbReference>
<dbReference type="Gene3D" id="3.90.550.50">
    <property type="match status" value="1"/>
</dbReference>
<dbReference type="InterPro" id="IPR017374">
    <property type="entry name" value="Fringe"/>
</dbReference>
<dbReference type="InterPro" id="IPR003378">
    <property type="entry name" value="Fringe-like_glycosylTrfase"/>
</dbReference>
<dbReference type="PANTHER" id="PTHR10811">
    <property type="entry name" value="FRINGE-RELATED"/>
    <property type="match status" value="1"/>
</dbReference>
<dbReference type="Pfam" id="PF02434">
    <property type="entry name" value="Fringe"/>
    <property type="match status" value="1"/>
</dbReference>
<dbReference type="PIRSF" id="PIRSF038073">
    <property type="entry name" value="B-acetylgalactosaminyltfrase"/>
    <property type="match status" value="1"/>
</dbReference>
<sequence>MLKSCGRKLLLSLVGSMFTCLLVLMVEPPGRPGLARGEAGGAQRALQSLGAARAAGQGAPGLRSFADYFGRLSRARRELPAAPPSPPRPPAEDITPRDVFIAVKTTKKFHKARLELLLDTWISRNRDMTFIFTDGEDEELKKQARNVINTNCSAAHSRQALSCKMAVEYDKFIESGRKWFCHVDDDNYVNVRTLVKLLSSYPHTQDIYIGKPSLDRPIQATERISENKMHPVHFWFATGGAGFCISRGLALKMSPWASGGHFMSTAEKIRLPDDCTIGYIIESVLGVKLIRSNLFHSHLENLHQVPKTEIHKQVTLSYGMFENKRNSIHMKGAFSVEEDPSRFRSVHCLLYPDTPWCPSNVVY</sequence>
<comment type="function">
    <text evidence="2">Glycosyltransferase that initiates the elongation of O-linked fucose residues attached to EGF-like repeats in the extracellular domain of Notch molecules. Essential mediator of somite segmentation and patterning.</text>
</comment>
<comment type="catalytic activity">
    <reaction evidence="2">
        <text>3-O-(alpha-L-fucosyl)-L-threonyl-[EGF-like domain protein] + UDP-N-acetyl-alpha-D-glucosamine = 3-O-(N-acetyl-beta-D-glucosaminyl-(1-&gt;3)-alpha-L-fucosyl)-L-threonyl-[EGF-like domain protein] + UDP + H(+)</text>
        <dbReference type="Rhea" id="RHEA:70531"/>
        <dbReference type="Rhea" id="RHEA-COMP:17922"/>
        <dbReference type="Rhea" id="RHEA-COMP:17923"/>
        <dbReference type="ChEBI" id="CHEBI:15378"/>
        <dbReference type="ChEBI" id="CHEBI:57705"/>
        <dbReference type="ChEBI" id="CHEBI:58223"/>
        <dbReference type="ChEBI" id="CHEBI:189631"/>
        <dbReference type="ChEBI" id="CHEBI:189634"/>
        <dbReference type="EC" id="2.4.1.222"/>
    </reaction>
</comment>
<comment type="catalytic activity">
    <reaction evidence="2">
        <text>3-O-(alpha-L-fucosyl)-L-seryl-[EGF-like domain protein] + UDP-N-acetyl-alpha-D-glucosamine = 3-O-(N-acetyl-beta-D-glucosaminyl-(1-&gt;3)-alpha-L-fucosyl)-L-seryl-[EGF-like domain protein] + UDP + H(+)</text>
        <dbReference type="Rhea" id="RHEA:70511"/>
        <dbReference type="Rhea" id="RHEA-COMP:17919"/>
        <dbReference type="Rhea" id="RHEA-COMP:17920"/>
        <dbReference type="ChEBI" id="CHEBI:15378"/>
        <dbReference type="ChEBI" id="CHEBI:57705"/>
        <dbReference type="ChEBI" id="CHEBI:58223"/>
        <dbReference type="ChEBI" id="CHEBI:189632"/>
        <dbReference type="ChEBI" id="CHEBI:189633"/>
        <dbReference type="EC" id="2.4.1.222"/>
    </reaction>
</comment>
<comment type="cofactor">
    <cofactor evidence="2">
        <name>Mn(2+)</name>
        <dbReference type="ChEBI" id="CHEBI:29035"/>
    </cofactor>
    <cofactor evidence="2">
        <name>Co(2+)</name>
        <dbReference type="ChEBI" id="CHEBI:48828"/>
    </cofactor>
    <text evidence="2">Manganese is the most effective. Can also use cobalt with lower efficiency. Has some activity with magnesium and calcium, but not zinc.</text>
</comment>
<comment type="subcellular location">
    <subcellularLocation>
        <location evidence="1">Golgi apparatus membrane</location>
        <topology evidence="1">Single-pass type II membrane protein</topology>
    </subcellularLocation>
</comment>
<comment type="developmental stage">
    <text>At stage 13 it is detected in the presomitic mesoderm, transiently observed before segmentation, and in the rostral part of the neural tube. Up-regulated in the neural tube, the retina and the otic vesicle from this stage on. At stage 17 a distinct stripe pattern was clear in the hindbrain and the spinal cord. Also found in the neuroepithelium of the midbrain and forebrain. The expression was down-regulated with the termination of neurogenesis at stage 36.</text>
</comment>
<comment type="PTM">
    <text evidence="4">A soluble form may be derived from the membrane form by proteolytic processing.</text>
</comment>
<comment type="similarity">
    <text evidence="4">Belongs to the glycosyltransferase 31 family.</text>
</comment>
<evidence type="ECO:0000250" key="1"/>
<evidence type="ECO:0000250" key="2">
    <source>
        <dbReference type="UniProtKB" id="O09010"/>
    </source>
</evidence>
<evidence type="ECO:0000255" key="3"/>
<evidence type="ECO:0000305" key="4"/>
<accession>O12971</accession>
<accession>O13130</accession>
<proteinExistence type="evidence at transcript level"/>
<name>LFNG_CHICK</name>
<organism>
    <name type="scientific">Gallus gallus</name>
    <name type="common">Chicken</name>
    <dbReference type="NCBI Taxonomy" id="9031"/>
    <lineage>
        <taxon>Eukaryota</taxon>
        <taxon>Metazoa</taxon>
        <taxon>Chordata</taxon>
        <taxon>Craniata</taxon>
        <taxon>Vertebrata</taxon>
        <taxon>Euteleostomi</taxon>
        <taxon>Archelosauria</taxon>
        <taxon>Archosauria</taxon>
        <taxon>Dinosauria</taxon>
        <taxon>Saurischia</taxon>
        <taxon>Theropoda</taxon>
        <taxon>Coelurosauria</taxon>
        <taxon>Aves</taxon>
        <taxon>Neognathae</taxon>
        <taxon>Galloanserae</taxon>
        <taxon>Galliformes</taxon>
        <taxon>Phasianidae</taxon>
        <taxon>Phasianinae</taxon>
        <taxon>Gallus</taxon>
    </lineage>
</organism>
<feature type="chain" id="PRO_0000219179" description="Beta-1,3-N-acetylglucosaminyltransferase lunatic fringe">
    <location>
        <begin position="1"/>
        <end position="363"/>
    </location>
</feature>
<feature type="topological domain" description="Cytoplasmic" evidence="3">
    <location>
        <begin position="1"/>
        <end position="8"/>
    </location>
</feature>
<feature type="transmembrane region" description="Helical; Signal-anchor for type II membrane protein" evidence="3">
    <location>
        <begin position="9"/>
        <end position="29"/>
    </location>
</feature>
<feature type="topological domain" description="Lumenal" evidence="3">
    <location>
        <begin position="30"/>
        <end position="363"/>
    </location>
</feature>
<feature type="active site" evidence="1">
    <location>
        <position position="274"/>
    </location>
</feature>
<feature type="binding site" evidence="1">
    <location>
        <position position="113"/>
    </location>
    <ligand>
        <name>substrate</name>
    </ligand>
</feature>
<feature type="binding site" evidence="1">
    <location>
        <position position="185"/>
    </location>
    <ligand>
        <name>substrate</name>
    </ligand>
</feature>
<feature type="binding site" evidence="1">
    <location>
        <position position="186"/>
    </location>
    <ligand>
        <name>Mn(2+)</name>
        <dbReference type="ChEBI" id="CHEBI:29035"/>
    </ligand>
</feature>
<feature type="binding site" evidence="1">
    <location>
        <position position="298"/>
    </location>
    <ligand>
        <name>Mn(2+)</name>
        <dbReference type="ChEBI" id="CHEBI:29035"/>
    </ligand>
</feature>
<feature type="site" description="Cleavage; by furin-like protease" evidence="3">
    <location>
        <begin position="77"/>
        <end position="78"/>
    </location>
</feature>
<feature type="glycosylation site" description="N-linked (GlcNAc...) asparagine" evidence="3">
    <location>
        <position position="151"/>
    </location>
</feature>
<feature type="disulfide bond" evidence="1">
    <location>
        <begin position="152"/>
        <end position="163"/>
    </location>
</feature>
<feature type="disulfide bond" evidence="1">
    <location>
        <begin position="181"/>
        <end position="244"/>
    </location>
</feature>
<feature type="disulfide bond" evidence="1">
    <location>
        <begin position="348"/>
        <end position="357"/>
    </location>
</feature>
<feature type="sequence conflict" description="In Ref. 2; AAB60860." evidence="4" ref="2">
    <original>L</original>
    <variation>C</variation>
    <location>
        <position position="161"/>
    </location>
</feature>
<feature type="sequence conflict" description="In Ref. 2; AAB60860." evidence="4" ref="2">
    <original>E</original>
    <variation>Q</variation>
    <location>
        <position position="267"/>
    </location>
</feature>
<reference key="1">
    <citation type="journal article" date="1997" name="Nature">
        <title>Expression of Radical fringe in limb-bud ectoderm regulates apical ectodermal ridge formation.</title>
        <authorList>
            <person name="Laufer E."/>
            <person name="Dahn R."/>
            <person name="Orozco O.E."/>
            <person name="Yeo C.-Y."/>
            <person name="Pisenti J."/>
            <person name="Henrique D."/>
            <person name="Abbott U.K."/>
            <person name="Fallon J.F."/>
            <person name="Tabin C."/>
        </authorList>
    </citation>
    <scope>NUCLEOTIDE SEQUENCE [MRNA]</scope>
</reference>
<reference key="2">
    <citation type="journal article" date="1997" name="Biochem. Biophys. Res. Commun.">
        <title>Identification of a chick homologue of Fringe and C-Fringe 1: involvement in the neurogenesis and the somitogenesis.</title>
        <authorList>
            <person name="Sakamoto K."/>
            <person name="Yan L."/>
            <person name="Imai H."/>
            <person name="Takagi M."/>
            <person name="Nabeshima Y."/>
            <person name="Takeda S."/>
            <person name="Katsube K."/>
        </authorList>
    </citation>
    <scope>NUCLEOTIDE SEQUENCE [MRNA]</scope>
    <source>
        <strain>Leghorn</strain>
    </source>
</reference>
<protein>
    <recommendedName>
        <fullName evidence="4">Beta-1,3-N-acetylglucosaminyltransferase lunatic fringe</fullName>
        <ecNumber evidence="2">2.4.1.222</ecNumber>
    </recommendedName>
    <alternativeName>
        <fullName>O-fucosylpeptide 3-beta-N-acetylglucosaminyltransferase</fullName>
    </alternativeName>
</protein>